<comment type="function">
    <text evidence="1">An essential GTPase which binds GTP, GDP and possibly (p)ppGpp with moderate affinity, with high nucleotide exchange rates and a fairly low GTP hydrolysis rate. Plays a role in control of the cell cycle, stress response, ribosome biogenesis and in those bacteria that undergo differentiation, in morphogenesis control.</text>
</comment>
<comment type="cofactor">
    <cofactor evidence="1">
        <name>Mg(2+)</name>
        <dbReference type="ChEBI" id="CHEBI:18420"/>
    </cofactor>
</comment>
<comment type="subunit">
    <text evidence="1">Monomer.</text>
</comment>
<comment type="subcellular location">
    <subcellularLocation>
        <location evidence="1">Cytoplasm</location>
    </subcellularLocation>
</comment>
<comment type="similarity">
    <text evidence="1">Belongs to the TRAFAC class OBG-HflX-like GTPase superfamily. OBG GTPase family.</text>
</comment>
<dbReference type="EC" id="3.6.5.-" evidence="1"/>
<dbReference type="EMBL" id="CP000781">
    <property type="protein sequence ID" value="ABS67299.1"/>
    <property type="molecule type" value="Genomic_DNA"/>
</dbReference>
<dbReference type="SMR" id="A7IH06"/>
<dbReference type="STRING" id="78245.Xaut_2055"/>
<dbReference type="KEGG" id="xau:Xaut_2055"/>
<dbReference type="eggNOG" id="COG0536">
    <property type="taxonomic scope" value="Bacteria"/>
</dbReference>
<dbReference type="HOGENOM" id="CLU_011747_2_0_5"/>
<dbReference type="OrthoDB" id="9807318at2"/>
<dbReference type="PhylomeDB" id="A7IH06"/>
<dbReference type="Proteomes" id="UP000002417">
    <property type="component" value="Chromosome"/>
</dbReference>
<dbReference type="GO" id="GO:0005737">
    <property type="term" value="C:cytoplasm"/>
    <property type="evidence" value="ECO:0007669"/>
    <property type="project" value="UniProtKB-SubCell"/>
</dbReference>
<dbReference type="GO" id="GO:0005525">
    <property type="term" value="F:GTP binding"/>
    <property type="evidence" value="ECO:0007669"/>
    <property type="project" value="UniProtKB-UniRule"/>
</dbReference>
<dbReference type="GO" id="GO:0003924">
    <property type="term" value="F:GTPase activity"/>
    <property type="evidence" value="ECO:0007669"/>
    <property type="project" value="UniProtKB-UniRule"/>
</dbReference>
<dbReference type="GO" id="GO:0000287">
    <property type="term" value="F:magnesium ion binding"/>
    <property type="evidence" value="ECO:0007669"/>
    <property type="project" value="InterPro"/>
</dbReference>
<dbReference type="GO" id="GO:0042254">
    <property type="term" value="P:ribosome biogenesis"/>
    <property type="evidence" value="ECO:0007669"/>
    <property type="project" value="UniProtKB-UniRule"/>
</dbReference>
<dbReference type="CDD" id="cd01898">
    <property type="entry name" value="Obg"/>
    <property type="match status" value="1"/>
</dbReference>
<dbReference type="FunFam" id="2.70.210.12:FF:000001">
    <property type="entry name" value="GTPase Obg"/>
    <property type="match status" value="1"/>
</dbReference>
<dbReference type="Gene3D" id="2.70.210.12">
    <property type="entry name" value="GTP1/OBG domain"/>
    <property type="match status" value="1"/>
</dbReference>
<dbReference type="Gene3D" id="3.40.50.300">
    <property type="entry name" value="P-loop containing nucleotide triphosphate hydrolases"/>
    <property type="match status" value="1"/>
</dbReference>
<dbReference type="HAMAP" id="MF_01454">
    <property type="entry name" value="GTPase_Obg"/>
    <property type="match status" value="1"/>
</dbReference>
<dbReference type="InterPro" id="IPR031167">
    <property type="entry name" value="G_OBG"/>
</dbReference>
<dbReference type="InterPro" id="IPR006073">
    <property type="entry name" value="GTP-bd"/>
</dbReference>
<dbReference type="InterPro" id="IPR014100">
    <property type="entry name" value="GTP-bd_Obg/CgtA"/>
</dbReference>
<dbReference type="InterPro" id="IPR006074">
    <property type="entry name" value="GTP1-OBG_CS"/>
</dbReference>
<dbReference type="InterPro" id="IPR006169">
    <property type="entry name" value="GTP1_OBG_dom"/>
</dbReference>
<dbReference type="InterPro" id="IPR036726">
    <property type="entry name" value="GTP1_OBG_dom_sf"/>
</dbReference>
<dbReference type="InterPro" id="IPR045086">
    <property type="entry name" value="OBG_GTPase"/>
</dbReference>
<dbReference type="InterPro" id="IPR027417">
    <property type="entry name" value="P-loop_NTPase"/>
</dbReference>
<dbReference type="NCBIfam" id="TIGR02729">
    <property type="entry name" value="Obg_CgtA"/>
    <property type="match status" value="1"/>
</dbReference>
<dbReference type="NCBIfam" id="NF008955">
    <property type="entry name" value="PRK12297.1"/>
    <property type="match status" value="1"/>
</dbReference>
<dbReference type="NCBIfam" id="NF008956">
    <property type="entry name" value="PRK12299.1"/>
    <property type="match status" value="1"/>
</dbReference>
<dbReference type="PANTHER" id="PTHR11702">
    <property type="entry name" value="DEVELOPMENTALLY REGULATED GTP-BINDING PROTEIN-RELATED"/>
    <property type="match status" value="1"/>
</dbReference>
<dbReference type="PANTHER" id="PTHR11702:SF31">
    <property type="entry name" value="MITOCHONDRIAL RIBOSOME-ASSOCIATED GTPASE 2"/>
    <property type="match status" value="1"/>
</dbReference>
<dbReference type="Pfam" id="PF01018">
    <property type="entry name" value="GTP1_OBG"/>
    <property type="match status" value="1"/>
</dbReference>
<dbReference type="Pfam" id="PF01926">
    <property type="entry name" value="MMR_HSR1"/>
    <property type="match status" value="1"/>
</dbReference>
<dbReference type="PIRSF" id="PIRSF002401">
    <property type="entry name" value="GTP_bd_Obg/CgtA"/>
    <property type="match status" value="1"/>
</dbReference>
<dbReference type="PRINTS" id="PR00326">
    <property type="entry name" value="GTP1OBG"/>
</dbReference>
<dbReference type="SUPFAM" id="SSF82051">
    <property type="entry name" value="Obg GTP-binding protein N-terminal domain"/>
    <property type="match status" value="1"/>
</dbReference>
<dbReference type="SUPFAM" id="SSF52540">
    <property type="entry name" value="P-loop containing nucleoside triphosphate hydrolases"/>
    <property type="match status" value="1"/>
</dbReference>
<dbReference type="PROSITE" id="PS51710">
    <property type="entry name" value="G_OBG"/>
    <property type="match status" value="1"/>
</dbReference>
<dbReference type="PROSITE" id="PS00905">
    <property type="entry name" value="GTP1_OBG"/>
    <property type="match status" value="1"/>
</dbReference>
<dbReference type="PROSITE" id="PS51883">
    <property type="entry name" value="OBG"/>
    <property type="match status" value="1"/>
</dbReference>
<evidence type="ECO:0000255" key="1">
    <source>
        <dbReference type="HAMAP-Rule" id="MF_01454"/>
    </source>
</evidence>
<evidence type="ECO:0000255" key="2">
    <source>
        <dbReference type="PROSITE-ProRule" id="PRU01231"/>
    </source>
</evidence>
<keyword id="KW-0963">Cytoplasm</keyword>
<keyword id="KW-0342">GTP-binding</keyword>
<keyword id="KW-0378">Hydrolase</keyword>
<keyword id="KW-0460">Magnesium</keyword>
<keyword id="KW-0479">Metal-binding</keyword>
<keyword id="KW-0547">Nucleotide-binding</keyword>
<keyword id="KW-1185">Reference proteome</keyword>
<reference key="1">
    <citation type="submission" date="2007-07" db="EMBL/GenBank/DDBJ databases">
        <title>Complete sequence of chromosome of Xanthobacter autotrophicus Py2.</title>
        <authorList>
            <consortium name="US DOE Joint Genome Institute"/>
            <person name="Copeland A."/>
            <person name="Lucas S."/>
            <person name="Lapidus A."/>
            <person name="Barry K."/>
            <person name="Glavina del Rio T."/>
            <person name="Hammon N."/>
            <person name="Israni S."/>
            <person name="Dalin E."/>
            <person name="Tice H."/>
            <person name="Pitluck S."/>
            <person name="Sims D."/>
            <person name="Brettin T."/>
            <person name="Bruce D."/>
            <person name="Detter J.C."/>
            <person name="Han C."/>
            <person name="Tapia R."/>
            <person name="Brainard J."/>
            <person name="Schmutz J."/>
            <person name="Larimer F."/>
            <person name="Land M."/>
            <person name="Hauser L."/>
            <person name="Kyrpides N."/>
            <person name="Kim E."/>
            <person name="Ensigns S.A."/>
            <person name="Richardson P."/>
        </authorList>
    </citation>
    <scope>NUCLEOTIDE SEQUENCE [LARGE SCALE GENOMIC DNA]</scope>
    <source>
        <strain>ATCC BAA-1158 / Py2</strain>
    </source>
</reference>
<proteinExistence type="inferred from homology"/>
<name>OBG_XANP2</name>
<sequence length="344" mass="37065">MKFLDQAKVYVRSGDGGAGCVSFRREKFIEFGGPDGGDGGRGGDVWIECVDGLNTLIDYRYQQHFKAKKGDHGKGANRTGARGSDVVLRVPAGTQILDETEETVLADLTEVGQRIKLLEGGNGGFGNAQFKTSTNQAPRRANPGLEGQERWIWLRLKLIADAGLVGLPNAGKSTFLAATTAAKPKIADYPFTTLHPGLGVVRVDGREFVLADIPGLIEGAHEGVGIGDRFLGHVERCRALLHLVDGTSEHAGKAYKTVRAELAAYGNGLDEKPEIVALSKVDALSPELLKQQKERLKRAAKKTPLLLSAQSGQGVQEALRLLLSVVEEERGAEKAEEPRDAWRP</sequence>
<gene>
    <name evidence="1" type="primary">obg</name>
    <name type="ordered locus">Xaut_2055</name>
</gene>
<feature type="chain" id="PRO_0000386392" description="GTPase Obg">
    <location>
        <begin position="1"/>
        <end position="344"/>
    </location>
</feature>
<feature type="domain" description="Obg" evidence="2">
    <location>
        <begin position="1"/>
        <end position="159"/>
    </location>
</feature>
<feature type="domain" description="OBG-type G" evidence="1">
    <location>
        <begin position="160"/>
        <end position="327"/>
    </location>
</feature>
<feature type="binding site" evidence="1">
    <location>
        <begin position="166"/>
        <end position="173"/>
    </location>
    <ligand>
        <name>GTP</name>
        <dbReference type="ChEBI" id="CHEBI:37565"/>
    </ligand>
</feature>
<feature type="binding site" evidence="1">
    <location>
        <position position="173"/>
    </location>
    <ligand>
        <name>Mg(2+)</name>
        <dbReference type="ChEBI" id="CHEBI:18420"/>
    </ligand>
</feature>
<feature type="binding site" evidence="1">
    <location>
        <begin position="191"/>
        <end position="195"/>
    </location>
    <ligand>
        <name>GTP</name>
        <dbReference type="ChEBI" id="CHEBI:37565"/>
    </ligand>
</feature>
<feature type="binding site" evidence="1">
    <location>
        <position position="193"/>
    </location>
    <ligand>
        <name>Mg(2+)</name>
        <dbReference type="ChEBI" id="CHEBI:18420"/>
    </ligand>
</feature>
<feature type="binding site" evidence="1">
    <location>
        <begin position="212"/>
        <end position="215"/>
    </location>
    <ligand>
        <name>GTP</name>
        <dbReference type="ChEBI" id="CHEBI:37565"/>
    </ligand>
</feature>
<feature type="binding site" evidence="1">
    <location>
        <begin position="279"/>
        <end position="282"/>
    </location>
    <ligand>
        <name>GTP</name>
        <dbReference type="ChEBI" id="CHEBI:37565"/>
    </ligand>
</feature>
<feature type="binding site" evidence="1">
    <location>
        <begin position="308"/>
        <end position="310"/>
    </location>
    <ligand>
        <name>GTP</name>
        <dbReference type="ChEBI" id="CHEBI:37565"/>
    </ligand>
</feature>
<protein>
    <recommendedName>
        <fullName evidence="1">GTPase Obg</fullName>
        <ecNumber evidence="1">3.6.5.-</ecNumber>
    </recommendedName>
    <alternativeName>
        <fullName evidence="1">GTP-binding protein Obg</fullName>
    </alternativeName>
</protein>
<organism>
    <name type="scientific">Xanthobacter autotrophicus (strain ATCC BAA-1158 / Py2)</name>
    <dbReference type="NCBI Taxonomy" id="78245"/>
    <lineage>
        <taxon>Bacteria</taxon>
        <taxon>Pseudomonadati</taxon>
        <taxon>Pseudomonadota</taxon>
        <taxon>Alphaproteobacteria</taxon>
        <taxon>Hyphomicrobiales</taxon>
        <taxon>Xanthobacteraceae</taxon>
        <taxon>Xanthobacter</taxon>
    </lineage>
</organism>
<accession>A7IH06</accession>